<gene>
    <name evidence="1" type="primary">thyA</name>
    <name type="ordered locus">RHOS4_19970</name>
    <name type="ORF">RSP_0390</name>
</gene>
<organism>
    <name type="scientific">Cereibacter sphaeroides (strain ATCC 17023 / DSM 158 / JCM 6121 / CCUG 31486 / LMG 2827 / NBRC 12203 / NCIMB 8253 / ATH 2.4.1.)</name>
    <name type="common">Rhodobacter sphaeroides</name>
    <dbReference type="NCBI Taxonomy" id="272943"/>
    <lineage>
        <taxon>Bacteria</taxon>
        <taxon>Pseudomonadati</taxon>
        <taxon>Pseudomonadota</taxon>
        <taxon>Alphaproteobacteria</taxon>
        <taxon>Rhodobacterales</taxon>
        <taxon>Paracoccaceae</taxon>
        <taxon>Cereibacter</taxon>
    </lineage>
</organism>
<feature type="chain" id="PRO_0000321478" description="Thymidylate synthase">
    <location>
        <begin position="1"/>
        <end position="298"/>
    </location>
</feature>
<feature type="active site" description="Nucleophile" evidence="1">
    <location>
        <position position="179"/>
    </location>
</feature>
<feature type="binding site" description="in other chain" evidence="1">
    <location>
        <position position="25"/>
    </location>
    <ligand>
        <name>dUMP</name>
        <dbReference type="ChEBI" id="CHEBI:246422"/>
        <note>ligand shared between dimeric partners</note>
    </ligand>
</feature>
<feature type="binding site" evidence="1">
    <location>
        <begin position="159"/>
        <end position="160"/>
    </location>
    <ligand>
        <name>dUMP</name>
        <dbReference type="ChEBI" id="CHEBI:246422"/>
        <note>ligand shared between dimeric partners</note>
    </ligand>
</feature>
<feature type="binding site" description="in other chain" evidence="1">
    <location>
        <begin position="200"/>
        <end position="203"/>
    </location>
    <ligand>
        <name>dUMP</name>
        <dbReference type="ChEBI" id="CHEBI:246422"/>
        <note>ligand shared between dimeric partners</note>
    </ligand>
</feature>
<feature type="binding site" evidence="1">
    <location>
        <position position="203"/>
    </location>
    <ligand>
        <name>(6R)-5,10-methylene-5,6,7,8-tetrahydrofolate</name>
        <dbReference type="ChEBI" id="CHEBI:15636"/>
    </ligand>
</feature>
<feature type="binding site" description="in other chain" evidence="1">
    <location>
        <position position="211"/>
    </location>
    <ligand>
        <name>dUMP</name>
        <dbReference type="ChEBI" id="CHEBI:246422"/>
        <note>ligand shared between dimeric partners</note>
    </ligand>
</feature>
<feature type="binding site" description="in other chain" evidence="1">
    <location>
        <begin position="241"/>
        <end position="243"/>
    </location>
    <ligand>
        <name>dUMP</name>
        <dbReference type="ChEBI" id="CHEBI:246422"/>
        <note>ligand shared between dimeric partners</note>
    </ligand>
</feature>
<feature type="binding site" evidence="1">
    <location>
        <position position="297"/>
    </location>
    <ligand>
        <name>(6R)-5,10-methylene-5,6,7,8-tetrahydrofolate</name>
        <dbReference type="ChEBI" id="CHEBI:15636"/>
    </ligand>
</feature>
<dbReference type="EC" id="2.1.1.45" evidence="1"/>
<dbReference type="EMBL" id="CP000143">
    <property type="protein sequence ID" value="ABA79565.1"/>
    <property type="molecule type" value="Genomic_DNA"/>
</dbReference>
<dbReference type="RefSeq" id="WP_011338197.1">
    <property type="nucleotide sequence ID" value="NC_007493.2"/>
</dbReference>
<dbReference type="RefSeq" id="YP_353466.1">
    <property type="nucleotide sequence ID" value="NC_007493.2"/>
</dbReference>
<dbReference type="SMR" id="Q3J0W9"/>
<dbReference type="STRING" id="272943.RSP_0390"/>
<dbReference type="EnsemblBacteria" id="ABA79565">
    <property type="protein sequence ID" value="ABA79565"/>
    <property type="gene ID" value="RSP_0390"/>
</dbReference>
<dbReference type="GeneID" id="3718898"/>
<dbReference type="KEGG" id="rsp:RSP_0390"/>
<dbReference type="PATRIC" id="fig|272943.9.peg.2336"/>
<dbReference type="eggNOG" id="COG0207">
    <property type="taxonomic scope" value="Bacteria"/>
</dbReference>
<dbReference type="OrthoDB" id="9774633at2"/>
<dbReference type="PhylomeDB" id="Q3J0W9"/>
<dbReference type="UniPathway" id="UPA00575"/>
<dbReference type="Proteomes" id="UP000002703">
    <property type="component" value="Chromosome 1"/>
</dbReference>
<dbReference type="GO" id="GO:0005829">
    <property type="term" value="C:cytosol"/>
    <property type="evidence" value="ECO:0007669"/>
    <property type="project" value="TreeGrafter"/>
</dbReference>
<dbReference type="GO" id="GO:0004799">
    <property type="term" value="F:thymidylate synthase activity"/>
    <property type="evidence" value="ECO:0007669"/>
    <property type="project" value="UniProtKB-UniRule"/>
</dbReference>
<dbReference type="GO" id="GO:0006231">
    <property type="term" value="P:dTMP biosynthetic process"/>
    <property type="evidence" value="ECO:0007669"/>
    <property type="project" value="UniProtKB-UniRule"/>
</dbReference>
<dbReference type="GO" id="GO:0006235">
    <property type="term" value="P:dTTP biosynthetic process"/>
    <property type="evidence" value="ECO:0007669"/>
    <property type="project" value="UniProtKB-UniRule"/>
</dbReference>
<dbReference type="GO" id="GO:0032259">
    <property type="term" value="P:methylation"/>
    <property type="evidence" value="ECO:0007669"/>
    <property type="project" value="UniProtKB-KW"/>
</dbReference>
<dbReference type="CDD" id="cd00351">
    <property type="entry name" value="TS_Pyrimidine_HMase"/>
    <property type="match status" value="1"/>
</dbReference>
<dbReference type="Gene3D" id="3.30.572.10">
    <property type="entry name" value="Thymidylate synthase/dCMP hydroxymethylase domain"/>
    <property type="match status" value="1"/>
</dbReference>
<dbReference type="HAMAP" id="MF_00008">
    <property type="entry name" value="Thymidy_synth_bact"/>
    <property type="match status" value="1"/>
</dbReference>
<dbReference type="InterPro" id="IPR045097">
    <property type="entry name" value="Thymidate_synth/dCMP_Mease"/>
</dbReference>
<dbReference type="InterPro" id="IPR023451">
    <property type="entry name" value="Thymidate_synth/dCMP_Mease_dom"/>
</dbReference>
<dbReference type="InterPro" id="IPR036926">
    <property type="entry name" value="Thymidate_synth/dCMP_Mease_sf"/>
</dbReference>
<dbReference type="InterPro" id="IPR000398">
    <property type="entry name" value="Thymidylate_synthase"/>
</dbReference>
<dbReference type="InterPro" id="IPR020940">
    <property type="entry name" value="Thymidylate_synthase_AS"/>
</dbReference>
<dbReference type="NCBIfam" id="NF002497">
    <property type="entry name" value="PRK01827.1-3"/>
    <property type="match status" value="1"/>
</dbReference>
<dbReference type="NCBIfam" id="TIGR03284">
    <property type="entry name" value="thym_sym"/>
    <property type="match status" value="1"/>
</dbReference>
<dbReference type="PANTHER" id="PTHR11548">
    <property type="entry name" value="THYMIDYLATE SYNTHASE 1"/>
    <property type="match status" value="1"/>
</dbReference>
<dbReference type="PANTHER" id="PTHR11548:SF1">
    <property type="entry name" value="THYMIDYLATE SYNTHASE 1"/>
    <property type="match status" value="1"/>
</dbReference>
<dbReference type="Pfam" id="PF00303">
    <property type="entry name" value="Thymidylat_synt"/>
    <property type="match status" value="1"/>
</dbReference>
<dbReference type="PRINTS" id="PR00108">
    <property type="entry name" value="THYMDSNTHASE"/>
</dbReference>
<dbReference type="SUPFAM" id="SSF55831">
    <property type="entry name" value="Thymidylate synthase/dCMP hydroxymethylase"/>
    <property type="match status" value="1"/>
</dbReference>
<dbReference type="PROSITE" id="PS00091">
    <property type="entry name" value="THYMIDYLATE_SYNTHASE"/>
    <property type="match status" value="1"/>
</dbReference>
<name>TYSY_CERS4</name>
<keyword id="KW-0963">Cytoplasm</keyword>
<keyword id="KW-0489">Methyltransferase</keyword>
<keyword id="KW-0545">Nucleotide biosynthesis</keyword>
<keyword id="KW-1185">Reference proteome</keyword>
<keyword id="KW-0808">Transferase</keyword>
<evidence type="ECO:0000255" key="1">
    <source>
        <dbReference type="HAMAP-Rule" id="MF_00008"/>
    </source>
</evidence>
<reference key="1">
    <citation type="submission" date="2005-09" db="EMBL/GenBank/DDBJ databases">
        <title>Complete sequence of chromosome 1 of Rhodobacter sphaeroides 2.4.1.</title>
        <authorList>
            <person name="Copeland A."/>
            <person name="Lucas S."/>
            <person name="Lapidus A."/>
            <person name="Barry K."/>
            <person name="Detter J.C."/>
            <person name="Glavina T."/>
            <person name="Hammon N."/>
            <person name="Israni S."/>
            <person name="Pitluck S."/>
            <person name="Richardson P."/>
            <person name="Mackenzie C."/>
            <person name="Choudhary M."/>
            <person name="Larimer F."/>
            <person name="Hauser L.J."/>
            <person name="Land M."/>
            <person name="Donohue T.J."/>
            <person name="Kaplan S."/>
        </authorList>
    </citation>
    <scope>NUCLEOTIDE SEQUENCE [LARGE SCALE GENOMIC DNA]</scope>
    <source>
        <strain>ATCC 17023 / DSM 158 / JCM 6121 / CCUG 31486 / LMG 2827 / NBRC 12203 / NCIMB 8253 / ATH 2.4.1.</strain>
    </source>
</reference>
<proteinExistence type="inferred from homology"/>
<comment type="function">
    <text evidence="1">Catalyzes the reductive methylation of 2'-deoxyuridine-5'-monophosphate (dUMP) to 2'-deoxythymidine-5'-monophosphate (dTMP) while utilizing 5,10-methylenetetrahydrofolate (mTHF) as the methyl donor and reductant in the reaction, yielding dihydrofolate (DHF) as a by-product. This enzymatic reaction provides an intracellular de novo source of dTMP, an essential precursor for DNA biosynthesis.</text>
</comment>
<comment type="catalytic activity">
    <reaction evidence="1">
        <text>dUMP + (6R)-5,10-methylene-5,6,7,8-tetrahydrofolate = 7,8-dihydrofolate + dTMP</text>
        <dbReference type="Rhea" id="RHEA:12104"/>
        <dbReference type="ChEBI" id="CHEBI:15636"/>
        <dbReference type="ChEBI" id="CHEBI:57451"/>
        <dbReference type="ChEBI" id="CHEBI:63528"/>
        <dbReference type="ChEBI" id="CHEBI:246422"/>
        <dbReference type="EC" id="2.1.1.45"/>
    </reaction>
</comment>
<comment type="pathway">
    <text evidence="1">Pyrimidine metabolism; dTTP biosynthesis.</text>
</comment>
<comment type="subunit">
    <text evidence="1">Homodimer.</text>
</comment>
<comment type="subcellular location">
    <subcellularLocation>
        <location evidence="1">Cytoplasm</location>
    </subcellularLocation>
</comment>
<comment type="similarity">
    <text evidence="1">Belongs to the thymidylate synthase family. Bacterial-type ThyA subfamily.</text>
</comment>
<accession>Q3J0W9</accession>
<sequence>MAHPEQQYLDLLAQTLERGDRRVDRTGVGTLSLFGAMLRFDLSGGQVPILTTKRVYWKTAVKEMLWFLTGGTNIRPLLQENVRIWSDWPLAAYRRESGEEISQAAFEQRVLEDEAFAARWGELGPVYGKQWRRWLGPDGHEHDQIAALIETLRTNPSSRRMLFHAWNVAEVGQMALPPCHMVYQYHVTSDGRLNALLYQRSVDLLLGAPFNFVGAAALQLMIAQQAGLVPGDLVWVGGDTHLYLNHLDQAREQTGRAPRDWPRMRLLRRADSIDDYRIEDFAVEGYDPHPAIAAEVAV</sequence>
<protein>
    <recommendedName>
        <fullName evidence="1">Thymidylate synthase</fullName>
        <shortName evidence="1">TS</shortName>
        <shortName evidence="1">TSase</shortName>
        <ecNumber evidence="1">2.1.1.45</ecNumber>
    </recommendedName>
</protein>